<accession>Q9XZ34</accession>
<accession>Q4V5E2</accession>
<sequence length="1416" mass="156820">MDVDFGAQAGQSYRTVQLSAKEVLAAGRRQHYCNMIDLLASSCKSSGLIATSFTDDELVEFWLGDILPLMFDADRKIQDCAVAALAEALVALDVSVIHSAKCWPQIRSEFVDKYTIIIGEMRDAKNSNWHKIWTLLVQIMDEDLLRGCVYINKFLALVELGFRNPDNGVRSEAFLCWRVLIKIFAAYDELTSAKRLRLLLIPLRTSQSRSSHVSGIKLRVWWYLLSCLDHELPKSFDSAVEHFLAFMLGGGPRNLATGLAHNYQTARELALPCLVALWGVESSEPLQRLMRELRLETLVQPSPLMSVEVFQQHWKPLLAAAVSGLKLLTENDATEAEQLLLQLLVRNLCLAMFRLAVAPFNVACCSEIEKILQAEDNSGGRVVRALFNTIAADNLVMERVSGSDHLDVLEAYLKLVLKSKTEVPAAILQRSIACIFAVDRIEANNQNEFRMLGSFAELLMQANDEEDFEGFAFKLQVWRQVSQALSNYLRNNALEYRVAHNASLLDTWLLWPLQTLAAFAGRRASNSFDASFCDQWRQLVNAGQNAPGRKKFLTDLKATLTDLLKSKDEPLFAELFDAYVTSLIKFGLCKEAPLYKDVFGLLQTIFEQPSSQKTLEACLNTLRNLVVELRQNELMVVFDSLKPTLSSGIQCWNKMKCEGGFLEEWKRGIQEKFRKLPMKTMANQLKELFKADDLFVIIPSVWSLNPEKLTDRQKERFAEKSDIPALYNDMSQSQDSASIKPWTPKKVVIAKSKQGELALTGKDDNGEVIDITASEESEKEPVRVDVVTPIRKKPGRKSQAQKELEAAARAASLAEEPPKRQTRTRAAQKETEQVAQPQPAFEPQLRSPKKLPPSPVVQSTAAAVKQAKVAKPTPVVVIAQSEDLFPEVAAEPEPQPEPVKKPDPVPETTQLTPPDVPLEAVPSTQLPGSSGDPAASAGAVAAGEMSPKKSGTRIYNLSSPPDRKQTNNSSSPTLRPKPTGHLTGRGAQLINMIRNKKLDAASGSPYACMSTSRLVHQVTPARAQDRAEQVSTPTSELNELTGTDHTSTPIQAPPSKDLLVFSKRLPSPSASPSVSILKRKLRCESLDDVTLDSPALKRKRVSFHDPPVSVTKEYLRDAEETRSSLKPKRCLLMDKVAQTTEMRQALRRRGRLDSIIEIERFASEQTARTATTDKSLDKSTGEAPEEDAFTSLKWNDTGNAHNISISEEPVKAMEVESELETAGQDLAIMDPEAALDLAVAQLPLESVLQRYFDKSPLKSAGMLAKFLSAQMTANEKLKTNVLETLSENHSKDFLDHAVRENLSSVVCDRLNPTSVLEYVCAKSKISASCRNGLLAQVPEILKSGPRSDSERLAFVQQLMVQCSPGDDLLLDLIDLLMRTRRERNNSTSTHISKGVVSAVGSPDNVAETAADSSSNL</sequence>
<comment type="function">
    <text evidence="2 3 4 5">Regulates the timing of initiation of DNA replication (PubMed:26022086, PubMed:29746464, PubMed:30277458). Functions in copy number control by promoting the underreplication of DNA, which is found in many late replicating euchromatic regions of salivary gland polytene chromosomes (PubMed:30277458). Promotes underreplication by localizing to active DNA replication forks in a partially SuUR-dependent manner, and inhibiting replication fork progression (PubMed:30277458). Might also work as an adapter to recruit Pp1-87B to multiple sites on the chromosome and may function with Pp1-87B to mediate underreplication (PubMed:26022086, PubMed:29746464, PubMed:30277458). Plays an essential role in embryonic development, in the transition from larvae to pupae and, probably, in proliferating tissues later on (PubMed:26022086, PubMed:29746464). In embryos, during mid-blastula transition, binds to and selectively delays the replication of large blocks of repetitive DNA satellite sequences during S phase in response to the activity of Cdk1; maternal Rif1 is specifically required for the normal extension of S phase 14 (PubMed:29746464). Unlike mammalian orthologs, does not appear to play a role in DNA damage repair (PubMed:22712556, PubMed:26022086).</text>
</comment>
<comment type="subunit">
    <text evidence="3 4 5">Interacts with Pp1-87b (PubMed:26022086, PubMed:29746464). Interacts with SuUR (via SNF2-like region) (PubMed:30277458).</text>
</comment>
<comment type="subcellular location">
    <subcellularLocation>
        <location evidence="2 3 4 5">Nucleus</location>
    </subcellularLocation>
    <subcellularLocation>
        <location evidence="2 3 4 5">Chromosome</location>
    </subcellularLocation>
    <subcellularLocation>
        <location evidence="3">Chromosome</location>
        <location evidence="3">Telomere</location>
    </subcellularLocation>
    <text evidence="2 3 4 5">Localizes to heterochromatin in all stages of amplifying follicle cells and accumulates at active DNA replication forks in the later stages of DNA amplification (PubMed:30277458). Associates with polytene chromosomes in salivary glands (PubMed:26022086). Associates with heterochromatin in a dynamic manner in different mitotic stages of the cell cycle (PubMed:22712556, PubMed:26022086, PubMed:29746464, PubMed:30277458). Absent at metaphase chromosomes but re-associates with the condensed chromosomes during late anaphase (PubMed:22712556, PubMed:26022086, PubMed:29746464). During mid-blastula transition in the S phase of embryos, dissociates from chromatin before the replication of the bound DNA satellite sequences (PubMed:29746464).</text>
</comment>
<comment type="tissue specificity">
    <text evidence="3 5">Expressed in nurse cells and follicle cells in the adult female (at protein level) (PubMed:26022086, PubMed:30277458). Detected in adult at extremely low levels (PubMed:26022086).</text>
</comment>
<comment type="developmental stage">
    <text evidence="2 3 4">Expressed in embryos at high levels between 0-2 hours; from 8 to 14 hours, the highest levels are in the brain then diminishes to negligible levels (at protein level) (PubMed:22712556, PubMed:26022086, PubMed:29746464). Expressed in larval imaginal disks and salivary glands (at protein level) (PubMed:26022086). Detected in larvae at lower levels in imaginal disks, the central nervous system and ovary and, at extremely low levels, in testis (PubMed:26022086).</text>
</comment>
<comment type="PTM">
    <text evidence="4">Phosphorylated, probably by Cdk1; phosphorylation regulates dissociation from heterochromatin.</text>
</comment>
<comment type="disruption phenotype">
    <text evidence="3 4 5">Embryos have a reduced hatch rate and develop into adults with reduced survival (PubMed:29746464). During mid-blastula transition in embryos, S phase 14 is significantly shorter (PubMed:29746464). In larval salivary glands, loss of DNA underreplication resulting in abnormally enlarged chromocenters (PubMed:30277458). RNAi-mediated knockdown results in lethality (PubMed:26022086). Escaper flies only live for a few days and are infertile (PubMed:26022086). Females show increased necrotic spots in the abdominal segments (PubMed:26022086). RNAi-mediated knockdown in the imaginal disks does not affect viability (PubMed:26022086).</text>
</comment>
<comment type="similarity">
    <text evidence="7">Belongs to the RIF1 family. Highly divergent.</text>
</comment>
<dbReference type="EMBL" id="AE013599">
    <property type="protein sequence ID" value="AAM70965.1"/>
    <property type="molecule type" value="Genomic_DNA"/>
</dbReference>
<dbReference type="EMBL" id="AF132192">
    <property type="protein sequence ID" value="AAD34780.1"/>
    <property type="molecule type" value="mRNA"/>
</dbReference>
<dbReference type="EMBL" id="BT022714">
    <property type="protein sequence ID" value="AAY55130.1"/>
    <property type="molecule type" value="mRNA"/>
</dbReference>
<dbReference type="RefSeq" id="NP_725497.1">
    <property type="nucleotide sequence ID" value="NM_166120.2"/>
</dbReference>
<dbReference type="FunCoup" id="Q9XZ34">
    <property type="interactions" value="150"/>
</dbReference>
<dbReference type="IntAct" id="Q9XZ34">
    <property type="interactions" value="1"/>
</dbReference>
<dbReference type="STRING" id="7227.FBpp0086441"/>
<dbReference type="GlyGen" id="Q9XZ34">
    <property type="glycosylation" value="1 site"/>
</dbReference>
<dbReference type="PaxDb" id="7227-FBpp0086441"/>
<dbReference type="EnsemblMetazoa" id="FBtr0087306">
    <property type="protein sequence ID" value="FBpp0086441"/>
    <property type="gene ID" value="FBgn0050085"/>
</dbReference>
<dbReference type="GeneID" id="246445"/>
<dbReference type="KEGG" id="dme:Dmel_CG30085"/>
<dbReference type="UCSC" id="CG30085-RA">
    <property type="organism name" value="d. melanogaster"/>
</dbReference>
<dbReference type="AGR" id="FB:FBgn0050085"/>
<dbReference type="CTD" id="55183"/>
<dbReference type="FlyBase" id="FBgn0050085">
    <property type="gene designation" value="Rif1"/>
</dbReference>
<dbReference type="VEuPathDB" id="VectorBase:FBgn0050085"/>
<dbReference type="eggNOG" id="ENOG502QV6C">
    <property type="taxonomic scope" value="Eukaryota"/>
</dbReference>
<dbReference type="GeneTree" id="ENSGT00390000012204"/>
<dbReference type="HOGENOM" id="CLU_005092_0_0_1"/>
<dbReference type="InParanoid" id="Q9XZ34"/>
<dbReference type="OMA" id="PCLVALW"/>
<dbReference type="OrthoDB" id="5399929at2759"/>
<dbReference type="PhylomeDB" id="Q9XZ34"/>
<dbReference type="BioGRID-ORCS" id="246445">
    <property type="hits" value="0 hits in 1 CRISPR screen"/>
</dbReference>
<dbReference type="GenomeRNAi" id="246445"/>
<dbReference type="PRO" id="PR:Q9XZ34"/>
<dbReference type="Proteomes" id="UP000000803">
    <property type="component" value="Chromosome 2R"/>
</dbReference>
<dbReference type="Bgee" id="FBgn0050085">
    <property type="expression patterns" value="Expressed in egg cell and 48 other cell types or tissues"/>
</dbReference>
<dbReference type="GO" id="GO:0010369">
    <property type="term" value="C:chromocenter"/>
    <property type="evidence" value="ECO:0000314"/>
    <property type="project" value="FlyBase"/>
</dbReference>
<dbReference type="GO" id="GO:0000781">
    <property type="term" value="C:chromosome, telomeric region"/>
    <property type="evidence" value="ECO:0000314"/>
    <property type="project" value="FlyBase"/>
</dbReference>
<dbReference type="GO" id="GO:0140445">
    <property type="term" value="C:chromosome, telomeric repeat region"/>
    <property type="evidence" value="ECO:0000318"/>
    <property type="project" value="GO_Central"/>
</dbReference>
<dbReference type="GO" id="GO:0000792">
    <property type="term" value="C:heterochromatin"/>
    <property type="evidence" value="ECO:0000314"/>
    <property type="project" value="UniProtKB"/>
</dbReference>
<dbReference type="GO" id="GO:0043596">
    <property type="term" value="C:nuclear replication fork"/>
    <property type="evidence" value="ECO:0000314"/>
    <property type="project" value="FlyBase"/>
</dbReference>
<dbReference type="GO" id="GO:0005634">
    <property type="term" value="C:nucleus"/>
    <property type="evidence" value="ECO:0000314"/>
    <property type="project" value="UniProtKB"/>
</dbReference>
<dbReference type="GO" id="GO:0001700">
    <property type="term" value="P:embryonic development via the syncytial blastoderm"/>
    <property type="evidence" value="ECO:0000315"/>
    <property type="project" value="UniProtKB"/>
</dbReference>
<dbReference type="GO" id="GO:2000104">
    <property type="term" value="P:negative regulation of DNA-templated DNA replication"/>
    <property type="evidence" value="ECO:0000315"/>
    <property type="project" value="FlyBase"/>
</dbReference>
<dbReference type="GO" id="GO:1901991">
    <property type="term" value="P:negative regulation of mitotic cell cycle phase transition"/>
    <property type="evidence" value="ECO:0000315"/>
    <property type="project" value="UniProtKB"/>
</dbReference>
<dbReference type="GO" id="GO:0030174">
    <property type="term" value="P:regulation of DNA-templated DNA replication initiation"/>
    <property type="evidence" value="ECO:0000315"/>
    <property type="project" value="UniProtKB"/>
</dbReference>
<dbReference type="GO" id="GO:0071807">
    <property type="term" value="P:replication fork arrest involved in DNA replication termination"/>
    <property type="evidence" value="ECO:0000315"/>
    <property type="project" value="UniProtKB"/>
</dbReference>
<dbReference type="GO" id="GO:0000723">
    <property type="term" value="P:telomere maintenance"/>
    <property type="evidence" value="ECO:0000318"/>
    <property type="project" value="GO_Central"/>
</dbReference>
<dbReference type="InterPro" id="IPR016024">
    <property type="entry name" value="ARM-type_fold"/>
</dbReference>
<dbReference type="InterPro" id="IPR022031">
    <property type="entry name" value="Rif1_N"/>
</dbReference>
<dbReference type="PANTHER" id="PTHR22928">
    <property type="entry name" value="TELOMERE-ASSOCIATED PROTEIN RIF1"/>
    <property type="match status" value="1"/>
</dbReference>
<dbReference type="PANTHER" id="PTHR22928:SF3">
    <property type="entry name" value="TELOMERE-ASSOCIATED PROTEIN RIF1"/>
    <property type="match status" value="1"/>
</dbReference>
<dbReference type="Pfam" id="PF12231">
    <property type="entry name" value="Rif1_N"/>
    <property type="match status" value="1"/>
</dbReference>
<dbReference type="SUPFAM" id="SSF48371">
    <property type="entry name" value="ARM repeat"/>
    <property type="match status" value="1"/>
</dbReference>
<proteinExistence type="evidence at protein level"/>
<organism evidence="11">
    <name type="scientific">Drosophila melanogaster</name>
    <name type="common">Fruit fly</name>
    <dbReference type="NCBI Taxonomy" id="7227"/>
    <lineage>
        <taxon>Eukaryota</taxon>
        <taxon>Metazoa</taxon>
        <taxon>Ecdysozoa</taxon>
        <taxon>Arthropoda</taxon>
        <taxon>Hexapoda</taxon>
        <taxon>Insecta</taxon>
        <taxon>Pterygota</taxon>
        <taxon>Neoptera</taxon>
        <taxon>Endopterygota</taxon>
        <taxon>Diptera</taxon>
        <taxon>Brachycera</taxon>
        <taxon>Muscomorpha</taxon>
        <taxon>Ephydroidea</taxon>
        <taxon>Drosophilidae</taxon>
        <taxon>Drosophila</taxon>
        <taxon>Sophophora</taxon>
    </lineage>
</organism>
<name>RIF1_DROME</name>
<feature type="chain" id="PRO_0000444898" description="Telomere-associated protein RIF1">
    <location>
        <begin position="1"/>
        <end position="1416"/>
    </location>
</feature>
<feature type="region of interest" description="Disordered" evidence="1">
    <location>
        <begin position="789"/>
        <end position="858"/>
    </location>
</feature>
<feature type="region of interest" description="Disordered" evidence="1">
    <location>
        <begin position="886"/>
        <end position="984"/>
    </location>
</feature>
<feature type="region of interest" description="Disordered" evidence="1">
    <location>
        <begin position="1021"/>
        <end position="1054"/>
    </location>
</feature>
<feature type="region of interest" description="Disordered" evidence="1">
    <location>
        <begin position="1166"/>
        <end position="1186"/>
    </location>
</feature>
<feature type="compositionally biased region" description="Low complexity" evidence="1">
    <location>
        <begin position="928"/>
        <end position="945"/>
    </location>
</feature>
<feature type="compositionally biased region" description="Polar residues" evidence="1">
    <location>
        <begin position="1029"/>
        <end position="1050"/>
    </location>
</feature>
<feature type="mutagenesis site" description="Probable loss of Cdk1-mediated regulation leads to lack of dissociation from chromatin and block of replication resulting in anaphase chromosome bridging during mid-blastula transition in embryos; in the eye imaginal disk, results in complete lethality with pupae developing into headless nearly adult flies; when associated with 958-A-A-959; 969-A-A-970; A-1002; A-1019; 1031-A-A-1032; A-1035; A-1043; 1047-A-A-1048; A-1067; A-1071; A-1075; A-1093; A-1102 and A-1140." evidence="4">
    <original>S</original>
    <variation>A</variation>
    <location>
        <position position="946"/>
    </location>
</feature>
<feature type="mutagenesis site" description="Probable loss of Cdk1-mediated regulation leads to lack of dissociation from chromatin and block of replication resulting in anaphase chromosome bridging during mid-blastula transition in embryos; in the eye imaginal disk, results in complete lethality with pupae developing into headless nearly adult flies; when associated with A-946; 969-A-A-970; A-1002; A-1019; 1031-A-A-1032; A-1035; A-1043; 1047-A-A-1048; A-1067; A-1071; A-1075; A-1093; A-1102 and A-1140." evidence="4">
    <original>SS</original>
    <variation>AA</variation>
    <location>
        <begin position="958"/>
        <end position="959"/>
    </location>
</feature>
<feature type="mutagenesis site" description="Probable loss of Cdk1-mediated regulation leads to lack of dissociation from chromatin and block of replication resulting in anaphase chromosome bridging during mid-blastula transition in embryos; in the eye imaginal disk, results in complete lethality with pupae developing into headless nearly adult flies; when associated with A-946; 958-A-A-959; A-1002; A-1019; 1031-A-A-1032; A-1035; A-1043; 1047-A-A-1048; A-1067; A-1071; A-1075; A-1093; A-1102 and A-1140." evidence="4">
    <original>SS</original>
    <variation>AA</variation>
    <location>
        <begin position="969"/>
        <end position="970"/>
    </location>
</feature>
<feature type="mutagenesis site" description="Probable loss of Cdk1-mediated regulation leads to lack of dissociation from chromatin and block of replication resulting in anaphase chromosome bridging during mid-blastula transition in embryos; in the eye imaginal disk, results in complete lethality with pupae developing into headless nearly adult flies; when associated with A-946; 958-A-A-959; 969-A-A-970; A-1019; 1031-A-A-1032; A-1035; A-1043; 1047-A-A-1048; A-1067; A-1071; A-1075; A-1093; A-1102 and A-1140." evidence="4">
    <original>S</original>
    <variation>A</variation>
    <location>
        <position position="1002"/>
    </location>
</feature>
<feature type="mutagenesis site" description="Probable loss of Cdk1-mediated regulation leads to lack of dissociation from chromatin and block of replication resulting in anaphase chromosome bridging during mid-blastula transition in embryos; in the eye imaginal disk, results in complete lethality with pupae developing into headless nearly adult flies; when associated with A-946; 958-A-A-959; 969-A-A-970; A-1002; 1031-A-A-1032; A-1035; A-1043; 1047-A-A-1048; A-1067; A-1071; A-1075; A-1093; A-1102 and A-1140." evidence="4">
    <original>T</original>
    <variation>A</variation>
    <location>
        <position position="1019"/>
    </location>
</feature>
<feature type="mutagenesis site" description="Probable loss of Cdk1-mediated regulation leads to lack of dissociation from chromatin and block of replication resulting in anaphase chromosome bridging during mid-blastula transition in embryos; in the eye imaginal disk, results in complete lethality with pupae developing into headless nearly adult flies; when associated with A-946; 958-A-A-959; 969-A-A-970; A-1002; A-1019; A-1035; A-1043; 1047-A-A-1048; A-1067; A-1071; A-1075; A-1093; A-1102 and A-1140." evidence="4">
    <original>ST</original>
    <variation>AA</variation>
    <location>
        <begin position="1031"/>
        <end position="1032"/>
    </location>
</feature>
<feature type="mutagenesis site" description="Probable loss of Cdk1-mediated regulation leads to lack of dissociation from chromatin and block of replication resulting in anaphase chromosome bridging during mid-blastula transition in embryos; in the eye imaginal disk, results in complete lethality with pupae developing into headless nearly adult flies; when associated with A-946; 958-A-A-959; 969-A-A-970; A-1002; A-1019; 1031-A-A-1032; A-1043; 1047-A-A-1048; A-1067; A-1071; A-1075; A-1093; A-1102 and A-1140." evidence="4">
    <original>S</original>
    <variation>A</variation>
    <location>
        <position position="1035"/>
    </location>
</feature>
<feature type="mutagenesis site" description="Probable loss of Cdk1-mediated regulation leads to lack of dissociation from chromatin and block of replication resulting in anaphase chromosome bridging during mid-blastula transition in embryos; in the eye imaginal disk, results in complete lethality with pupae developing into headless nearly adult flies; when associated with A-946; 958-A-A-959; 969-A-A-970; A-1002; A-1019; 1031-A-A-1032; A-1035; 1047-A-A-1048; A-1067; A-1071; A-1075; A-1093; A-1102 and A-1140." evidence="4">
    <original>T</original>
    <variation>A</variation>
    <location>
        <position position="1043"/>
    </location>
</feature>
<feature type="mutagenesis site" description="Probable loss of Cdk1-mediated regulation leads to lack of dissociation from chromatin and block of replication resulting in anaphase chromosome bridging during mid-blastula transition in embryos; in the eye imaginal disk, results in complete lethality with pupae developing into headless nearly adult flies; when associated with A-946; 958-A-A-959; 969-A-A-970; A-1002; A-1019; 1031-A-A-1032; A-1035; A-1043; A-1067; A-1071; A-1075; A-1093; A-1102 and A-1140." evidence="4">
    <original>ST</original>
    <variation>AA</variation>
    <location>
        <begin position="1047"/>
        <end position="1048"/>
    </location>
</feature>
<feature type="mutagenesis site" description="Probable loss of Cdk1-mediated regulation leads to lack of dissociation from chromatin and block of replication resulting in anaphase chromosome bridging during mid-blastula transition in embryos; in the eye imaginal disk, results in complete lethality with pupae developing into headless nearly adult flies; when associated with A-946; 958-A-A-959; 969-A-A-970; A-1002; A-1019; 1031-A-A-1032; A-1035; A-1043; 1047-A-A-1048; A-1071; A-1075; A-1093; A-1102 and A-1140." evidence="4">
    <original>S</original>
    <variation>A</variation>
    <location>
        <position position="1067"/>
    </location>
</feature>
<feature type="mutagenesis site" description="Probable loss of Cdk1-mediated regulation leads to lack of dissociation from chromatin and block of replication resulting in anaphase chromosome bridging during mid-blastula transition in embryos; in the eye imaginal disk, results in complete lethality with pupae developing into headless nearly adult flies; when associated with A-946; 958-A-A-959; 969-A-A-970; A-1002; A-1019; 1031-A-A-1032; A-1035; A-1043; 1047-A-A-1048; A-1067; A-1075; A-1093; A-1102 and A-1140." evidence="4">
    <original>S</original>
    <variation>A</variation>
    <location>
        <position position="1071"/>
    </location>
</feature>
<feature type="mutagenesis site" description="Probable loss of Cdk1-mediated regulation leads to lack of dissociation from chromatin and block of replication resulting in anaphase chromosome bridging during mid-blastula transition in embryos; in the eye imaginal disk, results in complete lethality with pupae developing into headless nearly adult flies; when associated with A-946; 958-A-A-959; 969-A-A-970; A-1002; A-1019; 1031-A-A-1032; A-1035; A-1043; 1047-A-A-1048; A-1067; A-1071; A-1093; A-1102 and A-1140." evidence="4">
    <original>S</original>
    <variation>A</variation>
    <location>
        <position position="1075"/>
    </location>
</feature>
<feature type="mutagenesis site" description="Significant loss of DNA underreplication in larval salivary glands; when associated with 1101-A--A-1103." evidence="5">
    <original>IL</original>
    <variation>AA</variation>
    <location>
        <begin position="1076"/>
        <end position="1077"/>
    </location>
</feature>
<feature type="mutagenesis site" description="Probable loss of Cdk1-mediated regulation leads to lack of dissociation from chromatin and block of replication resulting in anaphase chromosome bridging during mid-blastula transition in embryos; in the eye imaginal disk, results in complete lethality with pupae developing into headless nearly adult flies; when associated with A-946; 958-A-A-959; 969-A-A-970; A-1002; A-1019; 1031-A-A-1032; A-1035; A-1043; 1047-A-A-1048; A-1067; A-1071; A-1075; A-1102 and A-1140." evidence="4">
    <original>S</original>
    <variation>A</variation>
    <location>
        <position position="1093"/>
    </location>
</feature>
<feature type="mutagenesis site" description="Significant loss of DNA underreplication in larval salivary glands; when associated with 1076-A-A-1077." evidence="5">
    <original>VSF</original>
    <variation>ASA</variation>
    <location>
        <begin position="1101"/>
        <end position="1103"/>
    </location>
</feature>
<feature type="mutagenesis site" description="Probable loss of Cdk1-mediated regulation leads to lack of dissociation from chromatin and block of replication resulting in anaphase chromosome bridging during mid-blastula transition in embryos; in the eye imaginal disk, results in complete lethality with pupae developing into headless nearly adult flies; when associated with A-946; 958-A-A-959; 969-A-A-970; A-1002; A-1019; 1031-A-A-1032; A-1035; A-1043; 1047-A-A-1048; A-1067; A-1071; A-1075; A-1093 and A-1140." evidence="4">
    <original>S</original>
    <variation>A</variation>
    <location>
        <position position="1102"/>
    </location>
</feature>
<feature type="mutagenesis site" description="Probable loss of Cdk1-mediated regulation leads to lack of dissociation from chromatin and block of replication resulting in anaphase chromosome bridging during mid-blastula transition in embryos; in the eye imaginal disk, results in complete lethality with pupae developing into headless nearly adult flies; when associated with A-946; 958-A-A-959; 969-A-A-970; A-1002; A-1019; 1031-A-A-1032; A-1035; A-1043; 1047-A-A-1048; A-1067; A-1071; A-1075; A-1093 and A-1102." evidence="4">
    <original>T</original>
    <variation>A</variation>
    <location>
        <position position="1140"/>
    </location>
</feature>
<feature type="sequence conflict" description="In Ref. 4; AAY55130." evidence="7" ref="4">
    <original>K</original>
    <variation>E</variation>
    <location>
        <position position="474"/>
    </location>
</feature>
<feature type="sequence conflict" description="In Ref. 4; AAY55130." evidence="7" ref="4">
    <original>P</original>
    <variation>R</variation>
    <location>
        <position position="1049"/>
    </location>
</feature>
<feature type="sequence conflict" description="In Ref. 4; AAY55130." evidence="7" ref="4">
    <original>I</original>
    <variation>T</variation>
    <location>
        <position position="1156"/>
    </location>
</feature>
<keyword id="KW-0131">Cell cycle</keyword>
<keyword id="KW-0158">Chromosome</keyword>
<keyword id="KW-0539">Nucleus</keyword>
<keyword id="KW-1185">Reference proteome</keyword>
<keyword id="KW-0779">Telomere</keyword>
<evidence type="ECO:0000256" key="1">
    <source>
        <dbReference type="SAM" id="MobiDB-lite"/>
    </source>
</evidence>
<evidence type="ECO:0000269" key="2">
    <source>
    </source>
</evidence>
<evidence type="ECO:0000269" key="3">
    <source>
    </source>
</evidence>
<evidence type="ECO:0000269" key="4">
    <source>
    </source>
</evidence>
<evidence type="ECO:0000269" key="5">
    <source>
    </source>
</evidence>
<evidence type="ECO:0000303" key="6">
    <source>
    </source>
</evidence>
<evidence type="ECO:0000305" key="7"/>
<evidence type="ECO:0000312" key="8">
    <source>
        <dbReference type="EMBL" id="AAD34780.1"/>
    </source>
</evidence>
<evidence type="ECO:0000312" key="9">
    <source>
        <dbReference type="EMBL" id="AAY55130.1"/>
    </source>
</evidence>
<evidence type="ECO:0000312" key="10">
    <source>
        <dbReference type="FlyBase" id="FBgn0050085"/>
    </source>
</evidence>
<evidence type="ECO:0000312" key="11">
    <source>
        <dbReference type="Proteomes" id="UP000000803"/>
    </source>
</evidence>
<gene>
    <name evidence="6 10" type="primary">Rif1</name>
    <name evidence="10" type="ORF">CG30085</name>
</gene>
<protein>
    <recommendedName>
        <fullName evidence="7">Telomere-associated protein RIF1</fullName>
    </recommendedName>
    <alternativeName>
        <fullName evidence="6 10">Rap1 interacting factor 1</fullName>
    </alternativeName>
</protein>
<reference evidence="11" key="1">
    <citation type="journal article" date="2000" name="Science">
        <title>The genome sequence of Drosophila melanogaster.</title>
        <authorList>
            <person name="Adams M.D."/>
            <person name="Celniker S.E."/>
            <person name="Holt R.A."/>
            <person name="Evans C.A."/>
            <person name="Gocayne J.D."/>
            <person name="Amanatides P.G."/>
            <person name="Scherer S.E."/>
            <person name="Li P.W."/>
            <person name="Hoskins R.A."/>
            <person name="Galle R.F."/>
            <person name="George R.A."/>
            <person name="Lewis S.E."/>
            <person name="Richards S."/>
            <person name="Ashburner M."/>
            <person name="Henderson S.N."/>
            <person name="Sutton G.G."/>
            <person name="Wortman J.R."/>
            <person name="Yandell M.D."/>
            <person name="Zhang Q."/>
            <person name="Chen L.X."/>
            <person name="Brandon R.C."/>
            <person name="Rogers Y.-H.C."/>
            <person name="Blazej R.G."/>
            <person name="Champe M."/>
            <person name="Pfeiffer B.D."/>
            <person name="Wan K.H."/>
            <person name="Doyle C."/>
            <person name="Baxter E.G."/>
            <person name="Helt G."/>
            <person name="Nelson C.R."/>
            <person name="Miklos G.L.G."/>
            <person name="Abril J.F."/>
            <person name="Agbayani A."/>
            <person name="An H.-J."/>
            <person name="Andrews-Pfannkoch C."/>
            <person name="Baldwin D."/>
            <person name="Ballew R.M."/>
            <person name="Basu A."/>
            <person name="Baxendale J."/>
            <person name="Bayraktaroglu L."/>
            <person name="Beasley E.M."/>
            <person name="Beeson K.Y."/>
            <person name="Benos P.V."/>
            <person name="Berman B.P."/>
            <person name="Bhandari D."/>
            <person name="Bolshakov S."/>
            <person name="Borkova D."/>
            <person name="Botchan M.R."/>
            <person name="Bouck J."/>
            <person name="Brokstein P."/>
            <person name="Brottier P."/>
            <person name="Burtis K.C."/>
            <person name="Busam D.A."/>
            <person name="Butler H."/>
            <person name="Cadieu E."/>
            <person name="Center A."/>
            <person name="Chandra I."/>
            <person name="Cherry J.M."/>
            <person name="Cawley S."/>
            <person name="Dahlke C."/>
            <person name="Davenport L.B."/>
            <person name="Davies P."/>
            <person name="de Pablos B."/>
            <person name="Delcher A."/>
            <person name="Deng Z."/>
            <person name="Mays A.D."/>
            <person name="Dew I."/>
            <person name="Dietz S.M."/>
            <person name="Dodson K."/>
            <person name="Doup L.E."/>
            <person name="Downes M."/>
            <person name="Dugan-Rocha S."/>
            <person name="Dunkov B.C."/>
            <person name="Dunn P."/>
            <person name="Durbin K.J."/>
            <person name="Evangelista C.C."/>
            <person name="Ferraz C."/>
            <person name="Ferriera S."/>
            <person name="Fleischmann W."/>
            <person name="Fosler C."/>
            <person name="Gabrielian A.E."/>
            <person name="Garg N.S."/>
            <person name="Gelbart W.M."/>
            <person name="Glasser K."/>
            <person name="Glodek A."/>
            <person name="Gong F."/>
            <person name="Gorrell J.H."/>
            <person name="Gu Z."/>
            <person name="Guan P."/>
            <person name="Harris M."/>
            <person name="Harris N.L."/>
            <person name="Harvey D.A."/>
            <person name="Heiman T.J."/>
            <person name="Hernandez J.R."/>
            <person name="Houck J."/>
            <person name="Hostin D."/>
            <person name="Houston K.A."/>
            <person name="Howland T.J."/>
            <person name="Wei M.-H."/>
            <person name="Ibegwam C."/>
            <person name="Jalali M."/>
            <person name="Kalush F."/>
            <person name="Karpen G.H."/>
            <person name="Ke Z."/>
            <person name="Kennison J.A."/>
            <person name="Ketchum K.A."/>
            <person name="Kimmel B.E."/>
            <person name="Kodira C.D."/>
            <person name="Kraft C.L."/>
            <person name="Kravitz S."/>
            <person name="Kulp D."/>
            <person name="Lai Z."/>
            <person name="Lasko P."/>
            <person name="Lei Y."/>
            <person name="Levitsky A.A."/>
            <person name="Li J.H."/>
            <person name="Li Z."/>
            <person name="Liang Y."/>
            <person name="Lin X."/>
            <person name="Liu X."/>
            <person name="Mattei B."/>
            <person name="McIntosh T.C."/>
            <person name="McLeod M.P."/>
            <person name="McPherson D."/>
            <person name="Merkulov G."/>
            <person name="Milshina N.V."/>
            <person name="Mobarry C."/>
            <person name="Morris J."/>
            <person name="Moshrefi A."/>
            <person name="Mount S.M."/>
            <person name="Moy M."/>
            <person name="Murphy B."/>
            <person name="Murphy L."/>
            <person name="Muzny D.M."/>
            <person name="Nelson D.L."/>
            <person name="Nelson D.R."/>
            <person name="Nelson K.A."/>
            <person name="Nixon K."/>
            <person name="Nusskern D.R."/>
            <person name="Pacleb J.M."/>
            <person name="Palazzolo M."/>
            <person name="Pittman G.S."/>
            <person name="Pan S."/>
            <person name="Pollard J."/>
            <person name="Puri V."/>
            <person name="Reese M.G."/>
            <person name="Reinert K."/>
            <person name="Remington K."/>
            <person name="Saunders R.D.C."/>
            <person name="Scheeler F."/>
            <person name="Shen H."/>
            <person name="Shue B.C."/>
            <person name="Siden-Kiamos I."/>
            <person name="Simpson M."/>
            <person name="Skupski M.P."/>
            <person name="Smith T.J."/>
            <person name="Spier E."/>
            <person name="Spradling A.C."/>
            <person name="Stapleton M."/>
            <person name="Strong R."/>
            <person name="Sun E."/>
            <person name="Svirskas R."/>
            <person name="Tector C."/>
            <person name="Turner R."/>
            <person name="Venter E."/>
            <person name="Wang A.H."/>
            <person name="Wang X."/>
            <person name="Wang Z.-Y."/>
            <person name="Wassarman D.A."/>
            <person name="Weinstock G.M."/>
            <person name="Weissenbach J."/>
            <person name="Williams S.M."/>
            <person name="Woodage T."/>
            <person name="Worley K.C."/>
            <person name="Wu D."/>
            <person name="Yang S."/>
            <person name="Yao Q.A."/>
            <person name="Ye J."/>
            <person name="Yeh R.-F."/>
            <person name="Zaveri J.S."/>
            <person name="Zhan M."/>
            <person name="Zhang G."/>
            <person name="Zhao Q."/>
            <person name="Zheng L."/>
            <person name="Zheng X.H."/>
            <person name="Zhong F.N."/>
            <person name="Zhong W."/>
            <person name="Zhou X."/>
            <person name="Zhu S.C."/>
            <person name="Zhu X."/>
            <person name="Smith H.O."/>
            <person name="Gibbs R.A."/>
            <person name="Myers E.W."/>
            <person name="Rubin G.M."/>
            <person name="Venter J.C."/>
        </authorList>
    </citation>
    <scope>NUCLEOTIDE SEQUENCE [LARGE SCALE GENOMIC DNA]</scope>
    <source>
        <strain evidence="11">Berkeley</strain>
    </source>
</reference>
<reference evidence="11" key="2">
    <citation type="journal article" date="2002" name="Genome Biol.">
        <title>Annotation of the Drosophila melanogaster euchromatic genome: a systematic review.</title>
        <authorList>
            <person name="Misra S."/>
            <person name="Crosby M.A."/>
            <person name="Mungall C.J."/>
            <person name="Matthews B.B."/>
            <person name="Campbell K.S."/>
            <person name="Hradecky P."/>
            <person name="Huang Y."/>
            <person name="Kaminker J.S."/>
            <person name="Millburn G.H."/>
            <person name="Prochnik S.E."/>
            <person name="Smith C.D."/>
            <person name="Tupy J.L."/>
            <person name="Whitfield E.J."/>
            <person name="Bayraktaroglu L."/>
            <person name="Berman B.P."/>
            <person name="Bettencourt B.R."/>
            <person name="Celniker S.E."/>
            <person name="de Grey A.D.N.J."/>
            <person name="Drysdale R.A."/>
            <person name="Harris N.L."/>
            <person name="Richter J."/>
            <person name="Russo S."/>
            <person name="Schroeder A.J."/>
            <person name="Shu S.Q."/>
            <person name="Stapleton M."/>
            <person name="Yamada C."/>
            <person name="Ashburner M."/>
            <person name="Gelbart W.M."/>
            <person name="Rubin G.M."/>
            <person name="Lewis S.E."/>
        </authorList>
    </citation>
    <scope>GENOME REANNOTATION</scope>
    <source>
        <strain evidence="11">Berkeley</strain>
    </source>
</reference>
<reference evidence="8" key="3">
    <citation type="journal article" date="2000" name="Science">
        <title>A Drosophila complementary DNA resource.</title>
        <authorList>
            <person name="Rubin G.M."/>
            <person name="Hong L."/>
            <person name="Brokstein P."/>
            <person name="Evans-Holm M."/>
            <person name="Frise E."/>
            <person name="Stapleton M."/>
            <person name="Harvey D.A."/>
        </authorList>
    </citation>
    <scope>NUCLEOTIDE SEQUENCE [LARGE SCALE MRNA]</scope>
    <source>
        <strain evidence="8">Berkeley</strain>
        <tissue evidence="8">Embryo</tissue>
    </source>
</reference>
<reference evidence="9" key="4">
    <citation type="submission" date="2005-05" db="EMBL/GenBank/DDBJ databases">
        <authorList>
            <person name="Stapleton M."/>
            <person name="Carlson J."/>
            <person name="Chavez C."/>
            <person name="Frise E."/>
            <person name="George R."/>
            <person name="Pacleb J."/>
            <person name="Park S."/>
            <person name="Wan K."/>
            <person name="Yu C."/>
            <person name="Celniker S."/>
        </authorList>
    </citation>
    <scope>NUCLEOTIDE SEQUENCE [LARGE SCALE MRNA]</scope>
    <source>
        <strain evidence="9">Berkeley</strain>
        <tissue evidence="9">Embryo</tissue>
    </source>
</reference>
<reference evidence="7" key="5">
    <citation type="journal article" date="2012" name="BMC Genomics">
        <title>Functional diversification of yeast telomere associated protein, Rif1, in higher eukaryotes.</title>
        <authorList>
            <person name="Sreesankar E."/>
            <person name="Senthilkumar R."/>
            <person name="Bharathi V."/>
            <person name="Mishra R.K."/>
            <person name="Mishra K."/>
        </authorList>
    </citation>
    <scope>FUNCTION</scope>
    <scope>SUBCELLULAR LOCATION</scope>
    <scope>DEVELOPMENTAL STAGE</scope>
</reference>
<reference evidence="7" key="6">
    <citation type="journal article" date="2015" name="Sci. Rep.">
        <title>Drosophila Rif1 is an essential gene and controls late developmental events by direct interaction with PP1-87B.</title>
        <authorList>
            <person name="Sreesankar E."/>
            <person name="Bharathi V."/>
            <person name="Mishra R.K."/>
            <person name="Mishra K."/>
        </authorList>
    </citation>
    <scope>FUNCTION</scope>
    <scope>INTERACTION WITH PP1-87B</scope>
    <scope>SUBCELLULAR LOCATION</scope>
    <scope>TISSUE SPECIFICITY</scope>
    <scope>DEVELOPMENTAL STAGE</scope>
    <scope>DISRUPTION PHENOTYPE</scope>
</reference>
<reference key="7">
    <citation type="journal article" date="2016" name="Sci. Rep.">
        <title>Corrigendum: Drosophila Rif1 is an essential gene and controls late developmental events by direct interaction with PP1-87B.</title>
        <authorList>
            <person name="Sreesankar E."/>
            <person name="Bharathi V."/>
            <person name="Mishra R.K."/>
            <person name="Mishra K."/>
        </authorList>
    </citation>
    <scope>ERRATUM OF PUBMED:26022086</scope>
</reference>
<reference key="8">
    <citation type="journal article" date="2018" name="Elife">
        <title>Rif1 inhibits replication fork progression and controls DNA copy number in Drosophila.</title>
        <authorList>
            <person name="Munden A."/>
            <person name="Rong Z."/>
            <person name="Sun A."/>
            <person name="Gangula R."/>
            <person name="Mallal S."/>
            <person name="Nordman J.T."/>
        </authorList>
    </citation>
    <scope>FUNCTION</scope>
    <scope>INTERACTION WITH SUUR</scope>
    <scope>SUBCELLULAR LOCATION</scope>
    <scope>TISSUE SPECIFICITY</scope>
    <scope>DISRUPTION PHENOTYPE</scope>
    <scope>MUTAGENESIS OF 1076-ILE-LEU-1077 AND 1101-VAL--PHE-1103</scope>
</reference>
<reference evidence="7" key="9">
    <citation type="journal article" date="2018" name="PLoS Biol.">
        <title>Rif1 prolongs the embryonic S phase at the Drosophila mid-blastula transition.</title>
        <authorList>
            <person name="Seller C.A."/>
            <person name="O'Farrell P.H."/>
        </authorList>
    </citation>
    <scope>FUNCTION</scope>
    <scope>INTERACTION WITH PP1-87B</scope>
    <scope>SUBCELLULAR LOCATION</scope>
    <scope>DEVELOPMENTAL STAGE</scope>
    <scope>DISRUPTION PHENOTYPE</scope>
    <scope>MUTAGENESIS OF SER-946; 958-SER-SER-959; 969-SER-SER-970; SER-1002; THR-1019; 1031-SER-THR-1032; SER-1035; THR-1043; 1047-SER-THR-1048; SER-1067; SER-1071; SER-1075; SER-1093; SER-1102 AND THR-1140</scope>
</reference>